<evidence type="ECO:0000250" key="1"/>
<evidence type="ECO:0000255" key="2"/>
<evidence type="ECO:0000256" key="3">
    <source>
        <dbReference type="SAM" id="MobiDB-lite"/>
    </source>
</evidence>
<evidence type="ECO:0000305" key="4"/>
<sequence>MIKNTVRIINKNSNTFINIRNNNNNNINSSLKSGFGTIKRFNTTLNHNSSNSNIQTPISINSTIINNNNNSNNNNSNNIINNDLNVVKFSTISTPNSILDTLNENHSNQTNNVNNKNYNNNNNNFEKDDKFGPPNNQNNNKLDLDTSKLYVSKSTGELFFTFMILKVCSINFISDNSQKFLNLFEKLGLSKPLNFFIKYSFFKQFCAGETIRETEIFTEKLNKLGIGTILDYAIEELAGSSEGFDSVAENICETIRVAAKNPTNSFSCVKFTGLVTPSVLEKMNTLVSNVTTNVSELPIESFNSPLDFYLNQSSSLMKQGSEPLLTSKDIKEIKEFFNRMDKIFQLCHQRGVPILVDAEQSYYQVAIHHLTMSYSIKYNKEKPIIYNTYQMYLVNGMNVLKQHFELSSSQKFNFKLGAKIVRGAYMVTESERSQRLSTENPVLPTIQDTHKSYNTALDFLLNQIKSDPNSIGLMIASHNEDSINLGTKLIKQYKIDPTNPNIQFGQLFGMADFLSFNLVDQHQRIFKYVPFGPVEEVLPYLIRRMHENKGFIGSNSDKELFYLKKEIKRRLF</sequence>
<feature type="transit peptide" description="Mitochondrion" evidence="2">
    <location>
        <begin position="1"/>
        <end status="unknown"/>
    </location>
</feature>
<feature type="chain" id="PRO_0000329318" description="Proline dehydrogenase 1, mitochondrial">
    <location>
        <begin status="unknown"/>
        <end position="572"/>
    </location>
</feature>
<feature type="region of interest" description="Disordered" evidence="3">
    <location>
        <begin position="105"/>
        <end position="140"/>
    </location>
</feature>
<feature type="compositionally biased region" description="Low complexity" evidence="3">
    <location>
        <begin position="105"/>
        <end position="124"/>
    </location>
</feature>
<organism>
    <name type="scientific">Dictyostelium discoideum</name>
    <name type="common">Social amoeba</name>
    <dbReference type="NCBI Taxonomy" id="44689"/>
    <lineage>
        <taxon>Eukaryota</taxon>
        <taxon>Amoebozoa</taxon>
        <taxon>Evosea</taxon>
        <taxon>Eumycetozoa</taxon>
        <taxon>Dictyostelia</taxon>
        <taxon>Dictyosteliales</taxon>
        <taxon>Dictyosteliaceae</taxon>
        <taxon>Dictyostelium</taxon>
    </lineage>
</organism>
<protein>
    <recommendedName>
        <fullName>Proline dehydrogenase 1, mitochondrial</fullName>
        <ecNumber>1.5.5.2</ecNumber>
    </recommendedName>
    <alternativeName>
        <fullName>Proline oxidase</fullName>
    </alternativeName>
</protein>
<dbReference type="EC" id="1.5.5.2"/>
<dbReference type="EMBL" id="AAFI02000013">
    <property type="protein sequence ID" value="EAL69585.1"/>
    <property type="molecule type" value="Genomic_DNA"/>
</dbReference>
<dbReference type="RefSeq" id="XP_643510.1">
    <property type="nucleotide sequence ID" value="XM_638418.1"/>
</dbReference>
<dbReference type="SMR" id="Q86H28"/>
<dbReference type="FunCoup" id="Q86H28">
    <property type="interactions" value="283"/>
</dbReference>
<dbReference type="STRING" id="44689.Q86H28"/>
<dbReference type="PaxDb" id="44689-DDB0167252"/>
<dbReference type="EnsemblProtists" id="EAL69585">
    <property type="protein sequence ID" value="EAL69585"/>
    <property type="gene ID" value="DDB_G0275669"/>
</dbReference>
<dbReference type="GeneID" id="8620091"/>
<dbReference type="KEGG" id="ddi:DDB_G0275669"/>
<dbReference type="dictyBase" id="DDB_G0275669"/>
<dbReference type="VEuPathDB" id="AmoebaDB:DDB_G0275669"/>
<dbReference type="eggNOG" id="KOG0186">
    <property type="taxonomic scope" value="Eukaryota"/>
</dbReference>
<dbReference type="HOGENOM" id="CLU_018202_3_0_1"/>
<dbReference type="InParanoid" id="Q86H28"/>
<dbReference type="OMA" id="GPLKKYH"/>
<dbReference type="PhylomeDB" id="Q86H28"/>
<dbReference type="Reactome" id="R-DDI-389661">
    <property type="pathway name" value="Glyoxylate metabolism and glycine degradation"/>
</dbReference>
<dbReference type="Reactome" id="R-DDI-70688">
    <property type="pathway name" value="Proline catabolism"/>
</dbReference>
<dbReference type="UniPathway" id="UPA00261">
    <property type="reaction ID" value="UER00373"/>
</dbReference>
<dbReference type="PRO" id="PR:Q86H28"/>
<dbReference type="Proteomes" id="UP000002195">
    <property type="component" value="Chromosome 2"/>
</dbReference>
<dbReference type="GO" id="GO:0005759">
    <property type="term" value="C:mitochondrial matrix"/>
    <property type="evidence" value="ECO:0007669"/>
    <property type="project" value="UniProtKB-SubCell"/>
</dbReference>
<dbReference type="GO" id="GO:0005739">
    <property type="term" value="C:mitochondrion"/>
    <property type="evidence" value="ECO:0000318"/>
    <property type="project" value="GO_Central"/>
</dbReference>
<dbReference type="GO" id="GO:0071949">
    <property type="term" value="F:FAD binding"/>
    <property type="evidence" value="ECO:0000250"/>
    <property type="project" value="UniProtKB"/>
</dbReference>
<dbReference type="GO" id="GO:0004657">
    <property type="term" value="F:proline dehydrogenase activity"/>
    <property type="evidence" value="ECO:0000250"/>
    <property type="project" value="UniProtKB"/>
</dbReference>
<dbReference type="GO" id="GO:0010133">
    <property type="term" value="P:proline catabolic process to glutamate"/>
    <property type="evidence" value="ECO:0000318"/>
    <property type="project" value="GO_Central"/>
</dbReference>
<dbReference type="Gene3D" id="3.20.20.220">
    <property type="match status" value="1"/>
</dbReference>
<dbReference type="InterPro" id="IPR029041">
    <property type="entry name" value="FAD-linked_oxidoreductase-like"/>
</dbReference>
<dbReference type="InterPro" id="IPR002872">
    <property type="entry name" value="Proline_DH_dom"/>
</dbReference>
<dbReference type="InterPro" id="IPR015659">
    <property type="entry name" value="Proline_oxidase"/>
</dbReference>
<dbReference type="PANTHER" id="PTHR13914:SF0">
    <property type="entry name" value="PROLINE DEHYDROGENASE 1, MITOCHONDRIAL"/>
    <property type="match status" value="1"/>
</dbReference>
<dbReference type="PANTHER" id="PTHR13914">
    <property type="entry name" value="PROLINE OXIDASE"/>
    <property type="match status" value="1"/>
</dbReference>
<dbReference type="Pfam" id="PF01619">
    <property type="entry name" value="Pro_dh"/>
    <property type="match status" value="1"/>
</dbReference>
<dbReference type="SUPFAM" id="SSF51730">
    <property type="entry name" value="FAD-linked oxidoreductase"/>
    <property type="match status" value="1"/>
</dbReference>
<accession>Q86H28</accession>
<accession>Q553B0</accession>
<keyword id="KW-0274">FAD</keyword>
<keyword id="KW-0285">Flavoprotein</keyword>
<keyword id="KW-0496">Mitochondrion</keyword>
<keyword id="KW-0560">Oxidoreductase</keyword>
<keyword id="KW-0642">Proline metabolism</keyword>
<keyword id="KW-1185">Reference proteome</keyword>
<keyword id="KW-0809">Transit peptide</keyword>
<proteinExistence type="inferred from homology"/>
<reference key="1">
    <citation type="journal article" date="2002" name="Nature">
        <title>Sequence and analysis of chromosome 2 of Dictyostelium discoideum.</title>
        <authorList>
            <person name="Gloeckner G."/>
            <person name="Eichinger L."/>
            <person name="Szafranski K."/>
            <person name="Pachebat J.A."/>
            <person name="Bankier A.T."/>
            <person name="Dear P.H."/>
            <person name="Lehmann R."/>
            <person name="Baumgart C."/>
            <person name="Parra G."/>
            <person name="Abril J.F."/>
            <person name="Guigo R."/>
            <person name="Kumpf K."/>
            <person name="Tunggal B."/>
            <person name="Cox E.C."/>
            <person name="Quail M.A."/>
            <person name="Platzer M."/>
            <person name="Rosenthal A."/>
            <person name="Noegel A.A."/>
        </authorList>
    </citation>
    <scope>NUCLEOTIDE SEQUENCE [LARGE SCALE GENOMIC DNA]</scope>
    <source>
        <strain>AX4</strain>
    </source>
</reference>
<reference key="2">
    <citation type="journal article" date="2005" name="Nature">
        <title>The genome of the social amoeba Dictyostelium discoideum.</title>
        <authorList>
            <person name="Eichinger L."/>
            <person name="Pachebat J.A."/>
            <person name="Gloeckner G."/>
            <person name="Rajandream M.A."/>
            <person name="Sucgang R."/>
            <person name="Berriman M."/>
            <person name="Song J."/>
            <person name="Olsen R."/>
            <person name="Szafranski K."/>
            <person name="Xu Q."/>
            <person name="Tunggal B."/>
            <person name="Kummerfeld S."/>
            <person name="Madera M."/>
            <person name="Konfortov B.A."/>
            <person name="Rivero F."/>
            <person name="Bankier A.T."/>
            <person name="Lehmann R."/>
            <person name="Hamlin N."/>
            <person name="Davies R."/>
            <person name="Gaudet P."/>
            <person name="Fey P."/>
            <person name="Pilcher K."/>
            <person name="Chen G."/>
            <person name="Saunders D."/>
            <person name="Sodergren E.J."/>
            <person name="Davis P."/>
            <person name="Kerhornou A."/>
            <person name="Nie X."/>
            <person name="Hall N."/>
            <person name="Anjard C."/>
            <person name="Hemphill L."/>
            <person name="Bason N."/>
            <person name="Farbrother P."/>
            <person name="Desany B."/>
            <person name="Just E."/>
            <person name="Morio T."/>
            <person name="Rost R."/>
            <person name="Churcher C.M."/>
            <person name="Cooper J."/>
            <person name="Haydock S."/>
            <person name="van Driessche N."/>
            <person name="Cronin A."/>
            <person name="Goodhead I."/>
            <person name="Muzny D.M."/>
            <person name="Mourier T."/>
            <person name="Pain A."/>
            <person name="Lu M."/>
            <person name="Harper D."/>
            <person name="Lindsay R."/>
            <person name="Hauser H."/>
            <person name="James K.D."/>
            <person name="Quiles M."/>
            <person name="Madan Babu M."/>
            <person name="Saito T."/>
            <person name="Buchrieser C."/>
            <person name="Wardroper A."/>
            <person name="Felder M."/>
            <person name="Thangavelu M."/>
            <person name="Johnson D."/>
            <person name="Knights A."/>
            <person name="Loulseged H."/>
            <person name="Mungall K.L."/>
            <person name="Oliver K."/>
            <person name="Price C."/>
            <person name="Quail M.A."/>
            <person name="Urushihara H."/>
            <person name="Hernandez J."/>
            <person name="Rabbinowitsch E."/>
            <person name="Steffen D."/>
            <person name="Sanders M."/>
            <person name="Ma J."/>
            <person name="Kohara Y."/>
            <person name="Sharp S."/>
            <person name="Simmonds M.N."/>
            <person name="Spiegler S."/>
            <person name="Tivey A."/>
            <person name="Sugano S."/>
            <person name="White B."/>
            <person name="Walker D."/>
            <person name="Woodward J.R."/>
            <person name="Winckler T."/>
            <person name="Tanaka Y."/>
            <person name="Shaulsky G."/>
            <person name="Schleicher M."/>
            <person name="Weinstock G.M."/>
            <person name="Rosenthal A."/>
            <person name="Cox E.C."/>
            <person name="Chisholm R.L."/>
            <person name="Gibbs R.A."/>
            <person name="Loomis W.F."/>
            <person name="Platzer M."/>
            <person name="Kay R.R."/>
            <person name="Williams J.G."/>
            <person name="Dear P.H."/>
            <person name="Noegel A.A."/>
            <person name="Barrell B.G."/>
            <person name="Kuspa A."/>
        </authorList>
    </citation>
    <scope>NUCLEOTIDE SEQUENCE [LARGE SCALE GENOMIC DNA]</scope>
    <source>
        <strain>AX4</strain>
    </source>
</reference>
<gene>
    <name type="primary">prodh</name>
    <name type="ORF">DDB_G0275669</name>
</gene>
<name>PROD_DICDI</name>
<comment type="function">
    <text evidence="1">Converts proline to delta-1-pyrroline-5-carboxylate.</text>
</comment>
<comment type="catalytic activity">
    <reaction>
        <text>L-proline + a quinone = (S)-1-pyrroline-5-carboxylate + a quinol + H(+)</text>
        <dbReference type="Rhea" id="RHEA:23784"/>
        <dbReference type="ChEBI" id="CHEBI:15378"/>
        <dbReference type="ChEBI" id="CHEBI:17388"/>
        <dbReference type="ChEBI" id="CHEBI:24646"/>
        <dbReference type="ChEBI" id="CHEBI:60039"/>
        <dbReference type="ChEBI" id="CHEBI:132124"/>
        <dbReference type="EC" id="1.5.5.2"/>
    </reaction>
</comment>
<comment type="cofactor">
    <cofactor evidence="1">
        <name>FAD</name>
        <dbReference type="ChEBI" id="CHEBI:57692"/>
    </cofactor>
</comment>
<comment type="pathway">
    <text>Amino-acid degradation; L-proline degradation into L-glutamate; L-glutamate from L-proline: step 1/2.</text>
</comment>
<comment type="subcellular location">
    <subcellularLocation>
        <location evidence="1">Mitochondrion matrix</location>
    </subcellularLocation>
</comment>
<comment type="similarity">
    <text evidence="4">Belongs to the proline oxidase family.</text>
</comment>